<accession>B7L846</accession>
<dbReference type="EMBL" id="CU928145">
    <property type="protein sequence ID" value="CAV00757.1"/>
    <property type="molecule type" value="Genomic_DNA"/>
</dbReference>
<dbReference type="RefSeq" id="WP_000059111.1">
    <property type="nucleotide sequence ID" value="NZ_CP028304.1"/>
</dbReference>
<dbReference type="SMR" id="B7L846"/>
<dbReference type="GeneID" id="93778443"/>
<dbReference type="KEGG" id="eck:EC55989_4171"/>
<dbReference type="HOGENOM" id="CLU_026910_0_1_6"/>
<dbReference type="Proteomes" id="UP000000746">
    <property type="component" value="Chromosome"/>
</dbReference>
<dbReference type="GO" id="GO:0005737">
    <property type="term" value="C:cytoplasm"/>
    <property type="evidence" value="ECO:0007669"/>
    <property type="project" value="UniProtKB-SubCell"/>
</dbReference>
<dbReference type="GO" id="GO:0005886">
    <property type="term" value="C:plasma membrane"/>
    <property type="evidence" value="ECO:0007669"/>
    <property type="project" value="TreeGrafter"/>
</dbReference>
<dbReference type="GO" id="GO:0005524">
    <property type="term" value="F:ATP binding"/>
    <property type="evidence" value="ECO:0007669"/>
    <property type="project" value="UniProtKB-UniRule"/>
</dbReference>
<dbReference type="GO" id="GO:0016887">
    <property type="term" value="F:ATP hydrolysis activity"/>
    <property type="evidence" value="ECO:0007669"/>
    <property type="project" value="InterPro"/>
</dbReference>
<dbReference type="GO" id="GO:0003688">
    <property type="term" value="F:DNA replication origin binding"/>
    <property type="evidence" value="ECO:0007669"/>
    <property type="project" value="UniProtKB-UniRule"/>
</dbReference>
<dbReference type="GO" id="GO:0008289">
    <property type="term" value="F:lipid binding"/>
    <property type="evidence" value="ECO:0007669"/>
    <property type="project" value="UniProtKB-KW"/>
</dbReference>
<dbReference type="GO" id="GO:0006270">
    <property type="term" value="P:DNA replication initiation"/>
    <property type="evidence" value="ECO:0007669"/>
    <property type="project" value="UniProtKB-UniRule"/>
</dbReference>
<dbReference type="GO" id="GO:0006275">
    <property type="term" value="P:regulation of DNA replication"/>
    <property type="evidence" value="ECO:0007669"/>
    <property type="project" value="UniProtKB-UniRule"/>
</dbReference>
<dbReference type="CDD" id="cd00009">
    <property type="entry name" value="AAA"/>
    <property type="match status" value="1"/>
</dbReference>
<dbReference type="CDD" id="cd06571">
    <property type="entry name" value="Bac_DnaA_C"/>
    <property type="match status" value="1"/>
</dbReference>
<dbReference type="FunFam" id="1.10.1750.10:FF:000001">
    <property type="entry name" value="Chromosomal replication initiator protein DnaA"/>
    <property type="match status" value="1"/>
</dbReference>
<dbReference type="FunFam" id="1.10.8.60:FF:000003">
    <property type="entry name" value="Chromosomal replication initiator protein DnaA"/>
    <property type="match status" value="1"/>
</dbReference>
<dbReference type="FunFam" id="3.30.300.180:FF:000001">
    <property type="entry name" value="Chromosomal replication initiator protein DnaA"/>
    <property type="match status" value="1"/>
</dbReference>
<dbReference type="FunFam" id="3.40.50.300:FF:000103">
    <property type="entry name" value="Chromosomal replication initiator protein DnaA"/>
    <property type="match status" value="1"/>
</dbReference>
<dbReference type="Gene3D" id="1.10.1750.10">
    <property type="match status" value="1"/>
</dbReference>
<dbReference type="Gene3D" id="1.10.8.60">
    <property type="match status" value="1"/>
</dbReference>
<dbReference type="Gene3D" id="3.30.300.180">
    <property type="match status" value="1"/>
</dbReference>
<dbReference type="Gene3D" id="3.40.50.300">
    <property type="entry name" value="P-loop containing nucleotide triphosphate hydrolases"/>
    <property type="match status" value="1"/>
</dbReference>
<dbReference type="HAMAP" id="MF_00377">
    <property type="entry name" value="DnaA_bact"/>
    <property type="match status" value="1"/>
</dbReference>
<dbReference type="InterPro" id="IPR003593">
    <property type="entry name" value="AAA+_ATPase"/>
</dbReference>
<dbReference type="InterPro" id="IPR001957">
    <property type="entry name" value="Chromosome_initiator_DnaA"/>
</dbReference>
<dbReference type="InterPro" id="IPR020591">
    <property type="entry name" value="Chromosome_initiator_DnaA-like"/>
</dbReference>
<dbReference type="InterPro" id="IPR018312">
    <property type="entry name" value="Chromosome_initiator_DnaA_CS"/>
</dbReference>
<dbReference type="InterPro" id="IPR013159">
    <property type="entry name" value="DnaA_C"/>
</dbReference>
<dbReference type="InterPro" id="IPR013317">
    <property type="entry name" value="DnaA_dom"/>
</dbReference>
<dbReference type="InterPro" id="IPR024633">
    <property type="entry name" value="DnaA_N_dom"/>
</dbReference>
<dbReference type="InterPro" id="IPR038454">
    <property type="entry name" value="DnaA_N_sf"/>
</dbReference>
<dbReference type="InterPro" id="IPR027417">
    <property type="entry name" value="P-loop_NTPase"/>
</dbReference>
<dbReference type="InterPro" id="IPR010921">
    <property type="entry name" value="Trp_repressor/repl_initiator"/>
</dbReference>
<dbReference type="NCBIfam" id="TIGR00362">
    <property type="entry name" value="DnaA"/>
    <property type="match status" value="1"/>
</dbReference>
<dbReference type="PANTHER" id="PTHR30050">
    <property type="entry name" value="CHROMOSOMAL REPLICATION INITIATOR PROTEIN DNAA"/>
    <property type="match status" value="1"/>
</dbReference>
<dbReference type="PANTHER" id="PTHR30050:SF2">
    <property type="entry name" value="CHROMOSOMAL REPLICATION INITIATOR PROTEIN DNAA"/>
    <property type="match status" value="1"/>
</dbReference>
<dbReference type="Pfam" id="PF00308">
    <property type="entry name" value="Bac_DnaA"/>
    <property type="match status" value="1"/>
</dbReference>
<dbReference type="Pfam" id="PF08299">
    <property type="entry name" value="Bac_DnaA_C"/>
    <property type="match status" value="1"/>
</dbReference>
<dbReference type="Pfam" id="PF11638">
    <property type="entry name" value="DnaA_N"/>
    <property type="match status" value="1"/>
</dbReference>
<dbReference type="PRINTS" id="PR00051">
    <property type="entry name" value="DNAA"/>
</dbReference>
<dbReference type="SMART" id="SM00382">
    <property type="entry name" value="AAA"/>
    <property type="match status" value="1"/>
</dbReference>
<dbReference type="SMART" id="SM00760">
    <property type="entry name" value="Bac_DnaA_C"/>
    <property type="match status" value="1"/>
</dbReference>
<dbReference type="SUPFAM" id="SSF52540">
    <property type="entry name" value="P-loop containing nucleoside triphosphate hydrolases"/>
    <property type="match status" value="1"/>
</dbReference>
<dbReference type="SUPFAM" id="SSF48295">
    <property type="entry name" value="TrpR-like"/>
    <property type="match status" value="1"/>
</dbReference>
<dbReference type="PROSITE" id="PS01008">
    <property type="entry name" value="DNAA"/>
    <property type="match status" value="1"/>
</dbReference>
<feature type="chain" id="PRO_1000189795" description="Chromosomal replication initiator protein DnaA">
    <location>
        <begin position="1"/>
        <end position="467"/>
    </location>
</feature>
<feature type="region of interest" description="Domain I, interacts with DnaA modulators" evidence="1">
    <location>
        <begin position="1"/>
        <end position="90"/>
    </location>
</feature>
<feature type="region of interest" description="Domain II" evidence="1">
    <location>
        <begin position="91"/>
        <end position="130"/>
    </location>
</feature>
<feature type="region of interest" description="Disordered" evidence="2">
    <location>
        <begin position="98"/>
        <end position="119"/>
    </location>
</feature>
<feature type="region of interest" description="Domain III, AAA+ region" evidence="1">
    <location>
        <begin position="131"/>
        <end position="347"/>
    </location>
</feature>
<feature type="region of interest" description="Domain IV, binds dsDNA" evidence="1">
    <location>
        <begin position="348"/>
        <end position="467"/>
    </location>
</feature>
<feature type="compositionally biased region" description="Low complexity" evidence="2">
    <location>
        <begin position="98"/>
        <end position="111"/>
    </location>
</feature>
<feature type="binding site" evidence="1">
    <location>
        <position position="175"/>
    </location>
    <ligand>
        <name>ATP</name>
        <dbReference type="ChEBI" id="CHEBI:30616"/>
    </ligand>
</feature>
<feature type="binding site" evidence="1">
    <location>
        <position position="177"/>
    </location>
    <ligand>
        <name>ATP</name>
        <dbReference type="ChEBI" id="CHEBI:30616"/>
    </ligand>
</feature>
<feature type="binding site" evidence="1">
    <location>
        <position position="178"/>
    </location>
    <ligand>
        <name>ATP</name>
        <dbReference type="ChEBI" id="CHEBI:30616"/>
    </ligand>
</feature>
<feature type="binding site" evidence="1">
    <location>
        <position position="179"/>
    </location>
    <ligand>
        <name>ATP</name>
        <dbReference type="ChEBI" id="CHEBI:30616"/>
    </ligand>
</feature>
<keyword id="KW-0067">ATP-binding</keyword>
<keyword id="KW-0963">Cytoplasm</keyword>
<keyword id="KW-0235">DNA replication</keyword>
<keyword id="KW-0238">DNA-binding</keyword>
<keyword id="KW-0446">Lipid-binding</keyword>
<keyword id="KW-0547">Nucleotide-binding</keyword>
<keyword id="KW-1185">Reference proteome</keyword>
<protein>
    <recommendedName>
        <fullName evidence="1">Chromosomal replication initiator protein DnaA</fullName>
    </recommendedName>
</protein>
<gene>
    <name evidence="1" type="primary">dnaA</name>
    <name type="ordered locus">EC55989_4171</name>
</gene>
<organism>
    <name type="scientific">Escherichia coli (strain 55989 / EAEC)</name>
    <dbReference type="NCBI Taxonomy" id="585055"/>
    <lineage>
        <taxon>Bacteria</taxon>
        <taxon>Pseudomonadati</taxon>
        <taxon>Pseudomonadota</taxon>
        <taxon>Gammaproteobacteria</taxon>
        <taxon>Enterobacterales</taxon>
        <taxon>Enterobacteriaceae</taxon>
        <taxon>Escherichia</taxon>
    </lineage>
</organism>
<proteinExistence type="inferred from homology"/>
<sequence>MSLSLWQQCLARLQDELPATEFSMWIRPLQAELSDNTLALYAPNRFVLDWVRDKYLNNINGLLTSFCGADAPQLRFEVGTKPVTQTPQAAVTSNVAAPAQVAQTQPQRAAPSTRSGWDNVPAPAEPTYRSNVNVKHTFDNFVEGKSNQLARAAARQVADNPGGAYNPLFLYGGTGLGKTHLLHAVGNGIMARKPNAKVVYMHSERFVQDMVKALQNNAIEEFKRYYRSVDALLIDDIQFFANKERSQEEFFHTFNALLEGNQQIILTSDRYPKEINGVEDRLKSRFGWGLTVAIEPPELETRVAILMKKADENDIRLPGEVAFFIAKRLRSNVRELEGALNRVIANANFTGRAITIDFVREALRDLLALQEKLVTIDNIQKTVAEYYKIKVADLLSKRRSRSVARPRQMAMALAKELTNHSLPEIGDAFGGRDHTTVLHACRKIEQLREESHDIKEDFSNLIRTLSS</sequence>
<comment type="function">
    <text evidence="1">Plays an essential role in the initiation and regulation of chromosomal replication. ATP-DnaA binds to the origin of replication (oriC) to initiate formation of the DNA replication initiation complex once per cell cycle. Binds the DnaA box (a 9 base pair repeat at the origin) and separates the double-stranded (ds)DNA. Forms a right-handed helical filament on oriC DNA; dsDNA binds to the exterior of the filament while single-stranded (ss)DNA is stabiized in the filament's interior. The ATP-DnaA-oriC complex binds and stabilizes one strand of the AT-rich DNA unwinding element (DUE), permitting loading of DNA polymerase. After initiation quickly degrades to an ADP-DnaA complex that is not apt for DNA replication. Binds acidic phospholipids.</text>
</comment>
<comment type="subunit">
    <text evidence="1">Oligomerizes as a right-handed, spiral filament on DNA at oriC.</text>
</comment>
<comment type="subcellular location">
    <subcellularLocation>
        <location evidence="1">Cytoplasm</location>
    </subcellularLocation>
</comment>
<comment type="domain">
    <text evidence="1">Domain I is involved in oligomerization and binding regulators, domain II is flexibile and of varying length in different bacteria, domain III forms the AAA+ region, while domain IV binds dsDNA.</text>
</comment>
<comment type="similarity">
    <text evidence="1">Belongs to the DnaA family.</text>
</comment>
<reference key="1">
    <citation type="journal article" date="2009" name="PLoS Genet.">
        <title>Organised genome dynamics in the Escherichia coli species results in highly diverse adaptive paths.</title>
        <authorList>
            <person name="Touchon M."/>
            <person name="Hoede C."/>
            <person name="Tenaillon O."/>
            <person name="Barbe V."/>
            <person name="Baeriswyl S."/>
            <person name="Bidet P."/>
            <person name="Bingen E."/>
            <person name="Bonacorsi S."/>
            <person name="Bouchier C."/>
            <person name="Bouvet O."/>
            <person name="Calteau A."/>
            <person name="Chiapello H."/>
            <person name="Clermont O."/>
            <person name="Cruveiller S."/>
            <person name="Danchin A."/>
            <person name="Diard M."/>
            <person name="Dossat C."/>
            <person name="Karoui M.E."/>
            <person name="Frapy E."/>
            <person name="Garry L."/>
            <person name="Ghigo J.M."/>
            <person name="Gilles A.M."/>
            <person name="Johnson J."/>
            <person name="Le Bouguenec C."/>
            <person name="Lescat M."/>
            <person name="Mangenot S."/>
            <person name="Martinez-Jehanne V."/>
            <person name="Matic I."/>
            <person name="Nassif X."/>
            <person name="Oztas S."/>
            <person name="Petit M.A."/>
            <person name="Pichon C."/>
            <person name="Rouy Z."/>
            <person name="Ruf C.S."/>
            <person name="Schneider D."/>
            <person name="Tourret J."/>
            <person name="Vacherie B."/>
            <person name="Vallenet D."/>
            <person name="Medigue C."/>
            <person name="Rocha E.P.C."/>
            <person name="Denamur E."/>
        </authorList>
    </citation>
    <scope>NUCLEOTIDE SEQUENCE [LARGE SCALE GENOMIC DNA]</scope>
    <source>
        <strain>55989 / EAEC</strain>
    </source>
</reference>
<name>DNAA_ECO55</name>
<evidence type="ECO:0000255" key="1">
    <source>
        <dbReference type="HAMAP-Rule" id="MF_00377"/>
    </source>
</evidence>
<evidence type="ECO:0000256" key="2">
    <source>
        <dbReference type="SAM" id="MobiDB-lite"/>
    </source>
</evidence>